<feature type="chain" id="PRO_0000266041" description="Transmembrane protein 255A">
    <location>
        <begin position="1"/>
        <end position="321"/>
    </location>
</feature>
<feature type="transmembrane region" description="Helical" evidence="1">
    <location>
        <begin position="29"/>
        <end position="49"/>
    </location>
</feature>
<feature type="transmembrane region" description="Helical" evidence="1">
    <location>
        <begin position="56"/>
        <end position="76"/>
    </location>
</feature>
<feature type="transmembrane region" description="Helical" evidence="1">
    <location>
        <begin position="88"/>
        <end position="108"/>
    </location>
</feature>
<feature type="transmembrane region" description="Helical" evidence="1">
    <location>
        <begin position="200"/>
        <end position="220"/>
    </location>
</feature>
<feature type="region of interest" description="Disordered" evidence="2">
    <location>
        <begin position="279"/>
        <end position="300"/>
    </location>
</feature>
<feature type="compositionally biased region" description="Polar residues" evidence="2">
    <location>
        <begin position="279"/>
        <end position="297"/>
    </location>
</feature>
<organism>
    <name type="scientific">Xenopus laevis</name>
    <name type="common">African clawed frog</name>
    <dbReference type="NCBI Taxonomy" id="8355"/>
    <lineage>
        <taxon>Eukaryota</taxon>
        <taxon>Metazoa</taxon>
        <taxon>Chordata</taxon>
        <taxon>Craniata</taxon>
        <taxon>Vertebrata</taxon>
        <taxon>Euteleostomi</taxon>
        <taxon>Amphibia</taxon>
        <taxon>Batrachia</taxon>
        <taxon>Anura</taxon>
        <taxon>Pipoidea</taxon>
        <taxon>Pipidae</taxon>
        <taxon>Xenopodinae</taxon>
        <taxon>Xenopus</taxon>
        <taxon>Xenopus</taxon>
    </lineage>
</organism>
<evidence type="ECO:0000255" key="1"/>
<evidence type="ECO:0000256" key="2">
    <source>
        <dbReference type="SAM" id="MobiDB-lite"/>
    </source>
</evidence>
<evidence type="ECO:0000305" key="3"/>
<name>T255A_XENLA</name>
<gene>
    <name type="primary">tmem255a</name>
    <name type="synonym">fam70a</name>
</gene>
<sequence length="321" mass="35282">MLTQQPSQRTDIQAADSTGSFNKRRRNSVFVTVTLLIVSSLIFTLGMAATTRTENVTVGGYYPGVILGFGSILGIIGSNLIENKRQMLVASIVFISFGVIAAFCCAIVDGVFAARHLDLRPLYAGKCRYHSTTHNDHTTEVTCQQPMRNPCVLKIRSNTCYCCDLYNCGRIGNSGLYYEYTDVKSCQDVVHLYHLLWSVTILNIVGLFLGIITAAVLGGFKDMNPALPAISCIAETPRPTVQYNTRPAVPSYNTYYHSTPHLPPYTAYDLQHSSVFPASTPSGLSDDPNGQASSFMWPSNAPPRYSPPYFPPDEKPPPYTP</sequence>
<accession>Q66IQ1</accession>
<reference key="1">
    <citation type="submission" date="2004-08" db="EMBL/GenBank/DDBJ databases">
        <authorList>
            <consortium name="NIH - Xenopus Gene Collection (XGC) project"/>
        </authorList>
    </citation>
    <scope>NUCLEOTIDE SEQUENCE [LARGE SCALE MRNA]</scope>
    <source>
        <tissue>Eye</tissue>
    </source>
</reference>
<protein>
    <recommendedName>
        <fullName>Transmembrane protein 255A</fullName>
    </recommendedName>
    <alternativeName>
        <fullName>Protein FAM70A</fullName>
    </alternativeName>
</protein>
<dbReference type="EMBL" id="BC081249">
    <property type="protein sequence ID" value="AAH81249.1"/>
    <property type="molecule type" value="mRNA"/>
</dbReference>
<dbReference type="RefSeq" id="NP_001087806.1">
    <property type="nucleotide sequence ID" value="NM_001094337.1"/>
</dbReference>
<dbReference type="DNASU" id="447630"/>
<dbReference type="GeneID" id="447630"/>
<dbReference type="KEGG" id="xla:447630"/>
<dbReference type="AGR" id="Xenbase:XB-GENE-941246"/>
<dbReference type="CTD" id="447630"/>
<dbReference type="Xenbase" id="XB-GENE-941246">
    <property type="gene designation" value="tmem255a.L"/>
</dbReference>
<dbReference type="OMA" id="MWASNAP"/>
<dbReference type="OrthoDB" id="10034004at2759"/>
<dbReference type="Proteomes" id="UP000186698">
    <property type="component" value="Chromosome 8L"/>
</dbReference>
<dbReference type="Bgee" id="447630">
    <property type="expression patterns" value="Expressed in muscle tissue and 11 other cell types or tissues"/>
</dbReference>
<dbReference type="GO" id="GO:0016020">
    <property type="term" value="C:membrane"/>
    <property type="evidence" value="ECO:0007669"/>
    <property type="project" value="UniProtKB-SubCell"/>
</dbReference>
<dbReference type="InterPro" id="IPR028014">
    <property type="entry name" value="TMEM255"/>
</dbReference>
<dbReference type="PANTHER" id="PTHR33721:SF1">
    <property type="entry name" value="TRANSMEMBRANE PROTEIN 255A"/>
    <property type="match status" value="1"/>
</dbReference>
<dbReference type="PANTHER" id="PTHR33721">
    <property type="entry name" value="TRANSMEMBRANE PROTEIN 255B-LIKE"/>
    <property type="match status" value="1"/>
</dbReference>
<dbReference type="Pfam" id="PF14967">
    <property type="entry name" value="FAM70"/>
    <property type="match status" value="1"/>
</dbReference>
<proteinExistence type="evidence at transcript level"/>
<keyword id="KW-0472">Membrane</keyword>
<keyword id="KW-1185">Reference proteome</keyword>
<keyword id="KW-0812">Transmembrane</keyword>
<keyword id="KW-1133">Transmembrane helix</keyword>
<comment type="subcellular location">
    <subcellularLocation>
        <location evidence="3">Membrane</location>
        <topology evidence="3">Multi-pass membrane protein</topology>
    </subcellularLocation>
</comment>
<comment type="similarity">
    <text evidence="3">Belongs to the TMEM255 family.</text>
</comment>